<accession>A6Q1S6</accession>
<reference key="1">
    <citation type="journal article" date="2007" name="Proc. Natl. Acad. Sci. U.S.A.">
        <title>Deep-sea vent epsilon-proteobacterial genomes provide insights into emergence of pathogens.</title>
        <authorList>
            <person name="Nakagawa S."/>
            <person name="Takaki Y."/>
            <person name="Shimamura S."/>
            <person name="Reysenbach A.-L."/>
            <person name="Takai K."/>
            <person name="Horikoshi K."/>
        </authorList>
    </citation>
    <scope>NUCLEOTIDE SEQUENCE [LARGE SCALE GENOMIC DNA]</scope>
    <source>
        <strain>SB155-2</strain>
    </source>
</reference>
<feature type="chain" id="PRO_1000197112" description="N-(5'-phosphoribosyl)anthranilate isomerase">
    <location>
        <begin position="1"/>
        <end position="196"/>
    </location>
</feature>
<dbReference type="EC" id="5.3.1.24" evidence="1"/>
<dbReference type="EMBL" id="AP009178">
    <property type="protein sequence ID" value="BAF69435.1"/>
    <property type="molecule type" value="Genomic_DNA"/>
</dbReference>
<dbReference type="RefSeq" id="WP_012081698.1">
    <property type="nucleotide sequence ID" value="NC_009662.1"/>
</dbReference>
<dbReference type="SMR" id="A6Q1S6"/>
<dbReference type="STRING" id="387092.NIS_0321"/>
<dbReference type="KEGG" id="nis:NIS_0321"/>
<dbReference type="eggNOG" id="COG0135">
    <property type="taxonomic scope" value="Bacteria"/>
</dbReference>
<dbReference type="HOGENOM" id="CLU_076364_2_0_7"/>
<dbReference type="InParanoid" id="A6Q1S6"/>
<dbReference type="OrthoDB" id="9796196at2"/>
<dbReference type="UniPathway" id="UPA00035">
    <property type="reaction ID" value="UER00042"/>
</dbReference>
<dbReference type="Proteomes" id="UP000001118">
    <property type="component" value="Chromosome"/>
</dbReference>
<dbReference type="GO" id="GO:0004640">
    <property type="term" value="F:phosphoribosylanthranilate isomerase activity"/>
    <property type="evidence" value="ECO:0007669"/>
    <property type="project" value="UniProtKB-UniRule"/>
</dbReference>
<dbReference type="GO" id="GO:0000162">
    <property type="term" value="P:L-tryptophan biosynthetic process"/>
    <property type="evidence" value="ECO:0007669"/>
    <property type="project" value="UniProtKB-UniRule"/>
</dbReference>
<dbReference type="CDD" id="cd00405">
    <property type="entry name" value="PRAI"/>
    <property type="match status" value="1"/>
</dbReference>
<dbReference type="Gene3D" id="3.20.20.70">
    <property type="entry name" value="Aldolase class I"/>
    <property type="match status" value="1"/>
</dbReference>
<dbReference type="HAMAP" id="MF_00135">
    <property type="entry name" value="PRAI"/>
    <property type="match status" value="1"/>
</dbReference>
<dbReference type="InterPro" id="IPR013785">
    <property type="entry name" value="Aldolase_TIM"/>
</dbReference>
<dbReference type="InterPro" id="IPR001240">
    <property type="entry name" value="PRAI_dom"/>
</dbReference>
<dbReference type="InterPro" id="IPR011060">
    <property type="entry name" value="RibuloseP-bd_barrel"/>
</dbReference>
<dbReference type="InterPro" id="IPR044643">
    <property type="entry name" value="TrpF_fam"/>
</dbReference>
<dbReference type="PANTHER" id="PTHR42894">
    <property type="entry name" value="N-(5'-PHOSPHORIBOSYL)ANTHRANILATE ISOMERASE"/>
    <property type="match status" value="1"/>
</dbReference>
<dbReference type="PANTHER" id="PTHR42894:SF1">
    <property type="entry name" value="N-(5'-PHOSPHORIBOSYL)ANTHRANILATE ISOMERASE"/>
    <property type="match status" value="1"/>
</dbReference>
<dbReference type="Pfam" id="PF00697">
    <property type="entry name" value="PRAI"/>
    <property type="match status" value="1"/>
</dbReference>
<dbReference type="SUPFAM" id="SSF51366">
    <property type="entry name" value="Ribulose-phoshate binding barrel"/>
    <property type="match status" value="1"/>
</dbReference>
<comment type="catalytic activity">
    <reaction evidence="1">
        <text>N-(5-phospho-beta-D-ribosyl)anthranilate = 1-(2-carboxyphenylamino)-1-deoxy-D-ribulose 5-phosphate</text>
        <dbReference type="Rhea" id="RHEA:21540"/>
        <dbReference type="ChEBI" id="CHEBI:18277"/>
        <dbReference type="ChEBI" id="CHEBI:58613"/>
        <dbReference type="EC" id="5.3.1.24"/>
    </reaction>
</comment>
<comment type="pathway">
    <text evidence="1">Amino-acid biosynthesis; L-tryptophan biosynthesis; L-tryptophan from chorismate: step 3/5.</text>
</comment>
<comment type="similarity">
    <text evidence="1">Belongs to the TrpF family.</text>
</comment>
<protein>
    <recommendedName>
        <fullName evidence="1">N-(5'-phosphoribosyl)anthranilate isomerase</fullName>
        <shortName evidence="1">PRAI</shortName>
        <ecNumber evidence="1">5.3.1.24</ecNumber>
    </recommendedName>
</protein>
<organism>
    <name type="scientific">Nitratiruptor sp. (strain SB155-2)</name>
    <dbReference type="NCBI Taxonomy" id="387092"/>
    <lineage>
        <taxon>Bacteria</taxon>
        <taxon>Pseudomonadati</taxon>
        <taxon>Campylobacterota</taxon>
        <taxon>Epsilonproteobacteria</taxon>
        <taxon>Nautiliales</taxon>
        <taxon>Nitratiruptoraceae</taxon>
        <taxon>Nitratiruptor</taxon>
    </lineage>
</organism>
<name>TRPF_NITSB</name>
<gene>
    <name evidence="1" type="primary">trpF</name>
    <name type="ordered locus">NIS_0321</name>
</gene>
<sequence length="196" mass="22142">MRVKICGITNLEDALVAIEAGADALGFVFYEKSPRYIHPQEAKIISKKLPPFVERVGLFVHEEPVKIDEICSYCNMSLAQIHFDVEESFFEKLQTKALPVVRAKCAEDILQFSDRYRLVDAYVPEFGGAGRRVALEWFENIDCSKIVLAGGLSPKNVSEVKRYGFYGVDVSSGVEARKGKKDPQKVREFIQKAKFE</sequence>
<evidence type="ECO:0000255" key="1">
    <source>
        <dbReference type="HAMAP-Rule" id="MF_00135"/>
    </source>
</evidence>
<proteinExistence type="inferred from homology"/>
<keyword id="KW-0028">Amino-acid biosynthesis</keyword>
<keyword id="KW-0057">Aromatic amino acid biosynthesis</keyword>
<keyword id="KW-0413">Isomerase</keyword>
<keyword id="KW-1185">Reference proteome</keyword>
<keyword id="KW-0822">Tryptophan biosynthesis</keyword>